<reference evidence="11" key="1">
    <citation type="submission" date="2004-09" db="EMBL/GenBank/DDBJ databases">
        <title>Mouse homolog gene of SPAG8 (Homo sapiens sperm associated antigen 8).</title>
        <authorList>
            <person name="Di Q."/>
            <person name="Wang L.F."/>
            <person name="Miao S.Y."/>
            <person name="Zhang X.D."/>
            <person name="Qiao Y."/>
        </authorList>
    </citation>
    <scope>NUCLEOTIDE SEQUENCE [MRNA] (ISOFORM 2)</scope>
    <source>
        <tissue evidence="11">Testis</tissue>
    </source>
</reference>
<reference evidence="12" key="2">
    <citation type="journal article" date="2005" name="Science">
        <title>The transcriptional landscape of the mammalian genome.</title>
        <authorList>
            <person name="Carninci P."/>
            <person name="Kasukawa T."/>
            <person name="Katayama S."/>
            <person name="Gough J."/>
            <person name="Frith M.C."/>
            <person name="Maeda N."/>
            <person name="Oyama R."/>
            <person name="Ravasi T."/>
            <person name="Lenhard B."/>
            <person name="Wells C."/>
            <person name="Kodzius R."/>
            <person name="Shimokawa K."/>
            <person name="Bajic V.B."/>
            <person name="Brenner S.E."/>
            <person name="Batalov S."/>
            <person name="Forrest A.R."/>
            <person name="Zavolan M."/>
            <person name="Davis M.J."/>
            <person name="Wilming L.G."/>
            <person name="Aidinis V."/>
            <person name="Allen J.E."/>
            <person name="Ambesi-Impiombato A."/>
            <person name="Apweiler R."/>
            <person name="Aturaliya R.N."/>
            <person name="Bailey T.L."/>
            <person name="Bansal M."/>
            <person name="Baxter L."/>
            <person name="Beisel K.W."/>
            <person name="Bersano T."/>
            <person name="Bono H."/>
            <person name="Chalk A.M."/>
            <person name="Chiu K.P."/>
            <person name="Choudhary V."/>
            <person name="Christoffels A."/>
            <person name="Clutterbuck D.R."/>
            <person name="Crowe M.L."/>
            <person name="Dalla E."/>
            <person name="Dalrymple B.P."/>
            <person name="de Bono B."/>
            <person name="Della Gatta G."/>
            <person name="di Bernardo D."/>
            <person name="Down T."/>
            <person name="Engstrom P."/>
            <person name="Fagiolini M."/>
            <person name="Faulkner G."/>
            <person name="Fletcher C.F."/>
            <person name="Fukushima T."/>
            <person name="Furuno M."/>
            <person name="Futaki S."/>
            <person name="Gariboldi M."/>
            <person name="Georgii-Hemming P."/>
            <person name="Gingeras T.R."/>
            <person name="Gojobori T."/>
            <person name="Green R.E."/>
            <person name="Gustincich S."/>
            <person name="Harbers M."/>
            <person name="Hayashi Y."/>
            <person name="Hensch T.K."/>
            <person name="Hirokawa N."/>
            <person name="Hill D."/>
            <person name="Huminiecki L."/>
            <person name="Iacono M."/>
            <person name="Ikeo K."/>
            <person name="Iwama A."/>
            <person name="Ishikawa T."/>
            <person name="Jakt M."/>
            <person name="Kanapin A."/>
            <person name="Katoh M."/>
            <person name="Kawasawa Y."/>
            <person name="Kelso J."/>
            <person name="Kitamura H."/>
            <person name="Kitano H."/>
            <person name="Kollias G."/>
            <person name="Krishnan S.P."/>
            <person name="Kruger A."/>
            <person name="Kummerfeld S.K."/>
            <person name="Kurochkin I.V."/>
            <person name="Lareau L.F."/>
            <person name="Lazarevic D."/>
            <person name="Lipovich L."/>
            <person name="Liu J."/>
            <person name="Liuni S."/>
            <person name="McWilliam S."/>
            <person name="Madan Babu M."/>
            <person name="Madera M."/>
            <person name="Marchionni L."/>
            <person name="Matsuda H."/>
            <person name="Matsuzawa S."/>
            <person name="Miki H."/>
            <person name="Mignone F."/>
            <person name="Miyake S."/>
            <person name="Morris K."/>
            <person name="Mottagui-Tabar S."/>
            <person name="Mulder N."/>
            <person name="Nakano N."/>
            <person name="Nakauchi H."/>
            <person name="Ng P."/>
            <person name="Nilsson R."/>
            <person name="Nishiguchi S."/>
            <person name="Nishikawa S."/>
            <person name="Nori F."/>
            <person name="Ohara O."/>
            <person name="Okazaki Y."/>
            <person name="Orlando V."/>
            <person name="Pang K.C."/>
            <person name="Pavan W.J."/>
            <person name="Pavesi G."/>
            <person name="Pesole G."/>
            <person name="Petrovsky N."/>
            <person name="Piazza S."/>
            <person name="Reed J."/>
            <person name="Reid J.F."/>
            <person name="Ring B.Z."/>
            <person name="Ringwald M."/>
            <person name="Rost B."/>
            <person name="Ruan Y."/>
            <person name="Salzberg S.L."/>
            <person name="Sandelin A."/>
            <person name="Schneider C."/>
            <person name="Schoenbach C."/>
            <person name="Sekiguchi K."/>
            <person name="Semple C.A."/>
            <person name="Seno S."/>
            <person name="Sessa L."/>
            <person name="Sheng Y."/>
            <person name="Shibata Y."/>
            <person name="Shimada H."/>
            <person name="Shimada K."/>
            <person name="Silva D."/>
            <person name="Sinclair B."/>
            <person name="Sperling S."/>
            <person name="Stupka E."/>
            <person name="Sugiura K."/>
            <person name="Sultana R."/>
            <person name="Takenaka Y."/>
            <person name="Taki K."/>
            <person name="Tammoja K."/>
            <person name="Tan S.L."/>
            <person name="Tang S."/>
            <person name="Taylor M.S."/>
            <person name="Tegner J."/>
            <person name="Teichmann S.A."/>
            <person name="Ueda H.R."/>
            <person name="van Nimwegen E."/>
            <person name="Verardo R."/>
            <person name="Wei C.L."/>
            <person name="Yagi K."/>
            <person name="Yamanishi H."/>
            <person name="Zabarovsky E."/>
            <person name="Zhu S."/>
            <person name="Zimmer A."/>
            <person name="Hide W."/>
            <person name="Bult C."/>
            <person name="Grimmond S.M."/>
            <person name="Teasdale R.D."/>
            <person name="Liu E.T."/>
            <person name="Brusic V."/>
            <person name="Quackenbush J."/>
            <person name="Wahlestedt C."/>
            <person name="Mattick J.S."/>
            <person name="Hume D.A."/>
            <person name="Kai C."/>
            <person name="Sasaki D."/>
            <person name="Tomaru Y."/>
            <person name="Fukuda S."/>
            <person name="Kanamori-Katayama M."/>
            <person name="Suzuki M."/>
            <person name="Aoki J."/>
            <person name="Arakawa T."/>
            <person name="Iida J."/>
            <person name="Imamura K."/>
            <person name="Itoh M."/>
            <person name="Kato T."/>
            <person name="Kawaji H."/>
            <person name="Kawagashira N."/>
            <person name="Kawashima T."/>
            <person name="Kojima M."/>
            <person name="Kondo S."/>
            <person name="Konno H."/>
            <person name="Nakano K."/>
            <person name="Ninomiya N."/>
            <person name="Nishio T."/>
            <person name="Okada M."/>
            <person name="Plessy C."/>
            <person name="Shibata K."/>
            <person name="Shiraki T."/>
            <person name="Suzuki S."/>
            <person name="Tagami M."/>
            <person name="Waki K."/>
            <person name="Watahiki A."/>
            <person name="Okamura-Oho Y."/>
            <person name="Suzuki H."/>
            <person name="Kawai J."/>
            <person name="Hayashizaki Y."/>
        </authorList>
    </citation>
    <scope>NUCLEOTIDE SEQUENCE [LARGE SCALE MRNA] (ISOFORM 1)</scope>
</reference>
<reference evidence="15" key="3">
    <citation type="journal article" date="2009" name="PLoS Biol.">
        <title>Lineage-specific biology revealed by a finished genome assembly of the mouse.</title>
        <authorList>
            <person name="Church D.M."/>
            <person name="Goodstadt L."/>
            <person name="Hillier L.W."/>
            <person name="Zody M.C."/>
            <person name="Goldstein S."/>
            <person name="She X."/>
            <person name="Bult C.J."/>
            <person name="Agarwala R."/>
            <person name="Cherry J.L."/>
            <person name="DiCuccio M."/>
            <person name="Hlavina W."/>
            <person name="Kapustin Y."/>
            <person name="Meric P."/>
            <person name="Maglott D."/>
            <person name="Birtle Z."/>
            <person name="Marques A.C."/>
            <person name="Graves T."/>
            <person name="Zhou S."/>
            <person name="Teague B."/>
            <person name="Potamousis K."/>
            <person name="Churas C."/>
            <person name="Place M."/>
            <person name="Herschleb J."/>
            <person name="Runnheim R."/>
            <person name="Forrest D."/>
            <person name="Amos-Landgraf J."/>
            <person name="Schwartz D.C."/>
            <person name="Cheng Z."/>
            <person name="Lindblad-Toh K."/>
            <person name="Eichler E.E."/>
            <person name="Ponting C.P."/>
        </authorList>
    </citation>
    <scope>NUCLEOTIDE SEQUENCE [LARGE SCALE GENOMIC DNA]</scope>
    <source>
        <strain evidence="15">C57BL/6J</strain>
    </source>
</reference>
<reference evidence="13" key="4">
    <citation type="submission" date="2005-09" db="EMBL/GenBank/DDBJ databases">
        <authorList>
            <person name="Mural R.J."/>
            <person name="Adams M.D."/>
            <person name="Myers E.W."/>
            <person name="Smith H.O."/>
            <person name="Venter J.C."/>
        </authorList>
    </citation>
    <scope>NUCLEOTIDE SEQUENCE [LARGE SCALE GENOMIC DNA]</scope>
</reference>
<reference evidence="10" key="5">
    <citation type="journal article" date="2004" name="Genome Res.">
        <title>The status, quality, and expansion of the NIH full-length cDNA project: the Mammalian Gene Collection (MGC).</title>
        <authorList>
            <consortium name="The MGC Project Team"/>
        </authorList>
    </citation>
    <scope>NUCLEOTIDE SEQUENCE [LARGE SCALE MRNA] (ISOFORM 2)</scope>
    <source>
        <tissue evidence="10">Brain</tissue>
    </source>
</reference>
<reference evidence="9" key="6">
    <citation type="journal article" date="2007" name="Asian J. Androl.">
        <title>Inhibition of mouse acrosome reaction and sperm-zona pellucida binding by anti-human sperm membrane protein 1 antibody.</title>
        <authorList>
            <person name="Cheng G.Y."/>
            <person name="Shi J.L."/>
            <person name="Wang M."/>
            <person name="Hu Y.Q."/>
            <person name="Liu C.M."/>
            <person name="Wang Y.F."/>
            <person name="Xu C."/>
        </authorList>
    </citation>
    <scope>FUNCTION</scope>
    <scope>SUBCELLULAR LOCATION</scope>
</reference>
<reference key="7">
    <citation type="journal article" date="2010" name="Cell">
        <title>A tissue-specific atlas of mouse protein phosphorylation and expression.</title>
        <authorList>
            <person name="Huttlin E.L."/>
            <person name="Jedrychowski M.P."/>
            <person name="Elias J.E."/>
            <person name="Goswami T."/>
            <person name="Rad R."/>
            <person name="Beausoleil S.A."/>
            <person name="Villen J."/>
            <person name="Haas W."/>
            <person name="Sowa M.E."/>
            <person name="Gygi S.P."/>
        </authorList>
    </citation>
    <scope>IDENTIFICATION BY MASS SPECTROMETRY [LARGE SCALE ANALYSIS]</scope>
    <source>
        <tissue>Testis</tissue>
    </source>
</reference>
<reference evidence="9" key="8">
    <citation type="journal article" date="2010" name="FEBS Lett.">
        <title>Sperm associated antigen 8 (SPAG8), a novel regulator of activator of CREM in testis during spermatogenesis.</title>
        <authorList>
            <person name="Wu H."/>
            <person name="Chen Y."/>
            <person name="Miao S."/>
            <person name="Zhang C."/>
            <person name="Zong S."/>
            <person name="Koide S.S."/>
            <person name="Wang L."/>
        </authorList>
    </citation>
    <scope>FUNCTION</scope>
    <scope>INTERACTION WITH FHL5</scope>
    <scope>SUBCELLULAR LOCATION</scope>
    <scope>TISSUE SPECIFICITY</scope>
    <scope>DEVELOPMENTAL STAGE</scope>
</reference>
<reference evidence="17" key="9">
    <citation type="journal article" date="2023" name="Cell">
        <title>Structures of sperm flagellar doublet microtubules expand the genetic spectrum of male infertility.</title>
        <authorList>
            <person name="Zhou L."/>
            <person name="Liu H."/>
            <person name="Liu S."/>
            <person name="Yang X."/>
            <person name="Dong Y."/>
            <person name="Pan Y."/>
            <person name="Xiao Z."/>
            <person name="Zheng B."/>
            <person name="Sun Y."/>
            <person name="Huang P."/>
            <person name="Zhang X."/>
            <person name="Hu J."/>
            <person name="Sun R."/>
            <person name="Feng S."/>
            <person name="Zhu Y."/>
            <person name="Liu M."/>
            <person name="Gui M."/>
            <person name="Wu J."/>
        </authorList>
    </citation>
    <scope>STRUCTURE BY ELECTRON MICROSCOPY (3.50 ANGSTROMS) OF SPERM FLAGELLAR DOUBLET MICROTUBULES</scope>
    <scope>FUNCTION</scope>
    <scope>SUBCELLULAR LOCATION</scope>
    <scope>SUBUNIT</scope>
</reference>
<reference evidence="18" key="10">
    <citation type="journal article" date="2023" name="Cell">
        <title>De novo protein identification in mammalian sperm using in situ cryoelectron tomography and AlphaFold2 docking.</title>
        <authorList>
            <person name="Chen Z."/>
            <person name="Shiozaki M."/>
            <person name="Haas K.M."/>
            <person name="Skinner W.M."/>
            <person name="Zhao S."/>
            <person name="Guo C."/>
            <person name="Polacco B.J."/>
            <person name="Yu Z."/>
            <person name="Krogan N.J."/>
            <person name="Lishko P.V."/>
            <person name="Kaake R.M."/>
            <person name="Vale R.D."/>
            <person name="Agard D.A."/>
        </authorList>
    </citation>
    <scope>STRUCTURE BY ELECTRON MICROSCOPY (7.70 ANGSTROMS) OF SPERM FLAGELLAR DOUBLET MICROTUBULES</scope>
    <scope>FUNCTION</scope>
    <scope>SUBCELLULAR LOCATION</scope>
    <scope>SUBUNIT</scope>
</reference>
<reference evidence="16" key="11">
    <citation type="journal article" date="2023" name="Cell Discov.">
        <title>In-cell structural insight into the stability of sperm microtubule doublet.</title>
        <authorList>
            <person name="Tai L."/>
            <person name="Yin G."/>
            <person name="Huang X."/>
            <person name="Sun F."/>
            <person name="Zhu Y."/>
        </authorList>
    </citation>
    <scope>STRUCTURE BY ELECTRON MICROSCOPY (4.50 ANGSTROMS)</scope>
    <scope>FUNCTION</scope>
    <scope>SUBUNIT</scope>
    <scope>SUBCELLULAR LOCATION</scope>
</reference>
<accession>Q3V0Q6</accession>
<accession>B9EKF1</accession>
<accession>Q5UAV3</accession>
<keyword id="KW-0002">3D-structure</keyword>
<keyword id="KW-0025">Alternative splicing</keyword>
<keyword id="KW-0131">Cell cycle</keyword>
<keyword id="KW-0966">Cell projection</keyword>
<keyword id="KW-0969">Cilium</keyword>
<keyword id="KW-0963">Cytoplasm</keyword>
<keyword id="KW-0968">Cytoplasmic vesicle</keyword>
<keyword id="KW-0206">Cytoskeleton</keyword>
<keyword id="KW-0221">Differentiation</keyword>
<keyword id="KW-0278">Fertilization</keyword>
<keyword id="KW-0282">Flagellum</keyword>
<keyword id="KW-0539">Nucleus</keyword>
<keyword id="KW-1185">Reference proteome</keyword>
<keyword id="KW-0744">Spermatogenesis</keyword>
<comment type="function">
    <text evidence="2 4 5 6 7 8">Microtubule inner protein (MIP) part of the dynein-decorated doublet microtubules (DMTs) in cilia axoneme, which is required for motile cilia beating (PubMed:37295417, PubMed:37865089, PubMed:37989994). Plays a role in spermatogenesis by enhancing the binding of CREM isoform tau to its coactivator FHL5 and increasing the FHL5-regulated transcriptional activation of CREM isoform tau (PubMed:20488182). Involved in the acrosome reaction and in binding of sperm to the zona pellucida (PubMed:17187156). Plays a role in regulation of the cell cycle by controlling progression through the G2/M phase, possibly by delaying the activation of CDK1 which is required for entry into mitosis (By similarity). May play a role in fertility and microtubule formation through interaction with RANBP9 (By similarity).</text>
</comment>
<comment type="subunit">
    <text evidence="2 5 6 7 8">Microtubule inner protein component of sperm flagellar doublet microtubules (PubMed:37295417, PubMed:37865089, PubMed:37989994). Interacts with FHL5 (via second LIM domain) (PubMed:20488182). Interacts with RANBP9 (By similarity).</text>
</comment>
<comment type="interaction">
    <interactant intactId="EBI-7981981">
        <id>Q3V0Q6</id>
    </interactant>
    <interactant intactId="EBI-7530396">
        <id>Q9WTX7</id>
        <label>Fhl5</label>
    </interactant>
    <organismsDiffer>false</organismsDiffer>
    <experiments>5</experiments>
</comment>
<comment type="subcellular location">
    <subcellularLocation>
        <location evidence="5">Cytoplasm</location>
    </subcellularLocation>
    <subcellularLocation>
        <location evidence="5">Nucleus</location>
    </subcellularLocation>
    <subcellularLocation>
        <location evidence="4 5">Cytoplasmic vesicle</location>
        <location evidence="4 5">Secretory vesicle</location>
        <location evidence="4 5">Acrosome</location>
    </subcellularLocation>
    <subcellularLocation>
        <location evidence="2">Cytoplasm</location>
        <location evidence="2">Cytoskeleton</location>
        <location evidence="2">Microtubule organizing center</location>
    </subcellularLocation>
    <subcellularLocation>
        <location evidence="2">Cytoplasm</location>
        <location evidence="2">Cytoskeleton</location>
        <location evidence="2">Spindle</location>
    </subcellularLocation>
    <subcellularLocation>
        <location evidence="1">Cytoplasm</location>
        <location evidence="1">Cytoskeleton</location>
        <location evidence="1">Cilium axoneme</location>
    </subcellularLocation>
    <subcellularLocation>
        <location evidence="6 7 8">Cytoplasm</location>
        <location evidence="6 7 8">Cytoskeleton</location>
        <location evidence="6 7 8">Flagellum axoneme</location>
    </subcellularLocation>
    <text evidence="1 2 5">In mature sperm cells, detected in the acrosomal region of the head and in the middle piece of the tail (PubMed:20488182). Localized to the nucleus and cytoplasm of spermatocytes and round spermatids while, in elongating spermatids, expressed in the cytoplasm but not in the nucleus (PubMed:20488182). During the cell cycle, localized on the microtubule-organizing center (MTOC) during prophase. In metaphase, extends along spindle microtubules. In anaphase, detected on the astral microtubules and mid-zone. In telophase, remains at the mid-zone. After cytokinesis, returns to the MTOC (By similarity). Microtubule inner protein (MIP) part of the dynein-decorated doublet microtubules (DMTs) in cilia axoneme (By similarity).</text>
</comment>
<comment type="alternative products">
    <event type="alternative splicing"/>
    <isoform>
        <id>Q3V0Q6-1</id>
        <name>1</name>
        <sequence type="displayed"/>
    </isoform>
    <isoform>
        <id>Q3V0Q6-2</id>
        <name>2</name>
        <sequence type="described" ref="VSP_058322 VSP_058323"/>
    </isoform>
</comment>
<comment type="tissue specificity">
    <text evidence="5">Expressed in testis (at protein level). Not detected in brain, heart, kidney, spleen, liver, lung, thymus and colon (at protein level).</text>
</comment>
<comment type="developmental stage">
    <text evidence="5">In the testis, expressed at low levels at 3 weeks with levels markedly elevated by 4 weeks and into adulthood (at protein level).</text>
</comment>
<comment type="similarity">
    <text evidence="9">Belongs to the SPAG8 family.</text>
</comment>
<gene>
    <name evidence="14" type="primary">Spag8</name>
</gene>
<evidence type="ECO:0000250" key="1">
    <source>
        <dbReference type="UniProtKB" id="E1BNS6"/>
    </source>
</evidence>
<evidence type="ECO:0000250" key="2">
    <source>
        <dbReference type="UniProtKB" id="Q99932"/>
    </source>
</evidence>
<evidence type="ECO:0000256" key="3">
    <source>
        <dbReference type="SAM" id="MobiDB-lite"/>
    </source>
</evidence>
<evidence type="ECO:0000269" key="4">
    <source>
    </source>
</evidence>
<evidence type="ECO:0000269" key="5">
    <source>
    </source>
</evidence>
<evidence type="ECO:0000269" key="6">
    <source>
    </source>
</evidence>
<evidence type="ECO:0000269" key="7">
    <source>
    </source>
</evidence>
<evidence type="ECO:0000269" key="8">
    <source>
    </source>
</evidence>
<evidence type="ECO:0000305" key="9"/>
<evidence type="ECO:0000312" key="10">
    <source>
        <dbReference type="EMBL" id="AAI50869.1"/>
    </source>
</evidence>
<evidence type="ECO:0000312" key="11">
    <source>
        <dbReference type="EMBL" id="AAV31155.1"/>
    </source>
</evidence>
<evidence type="ECO:0000312" key="12">
    <source>
        <dbReference type="EMBL" id="BAE21448.1"/>
    </source>
</evidence>
<evidence type="ECO:0000312" key="13">
    <source>
        <dbReference type="EMBL" id="EDL02455.1"/>
    </source>
</evidence>
<evidence type="ECO:0000312" key="14">
    <source>
        <dbReference type="MGI" id="MGI:3056295"/>
    </source>
</evidence>
<evidence type="ECO:0000312" key="15">
    <source>
        <dbReference type="Proteomes" id="UP000000589"/>
    </source>
</evidence>
<evidence type="ECO:0007744" key="16">
    <source>
        <dbReference type="PDB" id="8I7R"/>
    </source>
</evidence>
<evidence type="ECO:0007744" key="17">
    <source>
        <dbReference type="PDB" id="8IYJ"/>
    </source>
</evidence>
<evidence type="ECO:0007744" key="18">
    <source>
        <dbReference type="PDB" id="8TO0"/>
    </source>
</evidence>
<feature type="chain" id="PRO_0000436205" description="Sperm-associated antigen 8">
    <location>
        <begin position="1"/>
        <end position="470"/>
    </location>
</feature>
<feature type="region of interest" description="Disordered" evidence="3">
    <location>
        <begin position="1"/>
        <end position="70"/>
    </location>
</feature>
<feature type="region of interest" description="Disordered" evidence="3">
    <location>
        <begin position="117"/>
        <end position="178"/>
    </location>
</feature>
<feature type="region of interest" description="Disordered" evidence="3">
    <location>
        <begin position="302"/>
        <end position="321"/>
    </location>
</feature>
<feature type="region of interest" description="Mn 1" evidence="2">
    <location>
        <begin position="312"/>
        <end position="325"/>
    </location>
</feature>
<feature type="region of interest" description="Mn 2" evidence="2">
    <location>
        <begin position="364"/>
        <end position="378"/>
    </location>
</feature>
<feature type="compositionally biased region" description="Polar residues" evidence="3">
    <location>
        <begin position="1"/>
        <end position="21"/>
    </location>
</feature>
<feature type="compositionally biased region" description="Low complexity" evidence="3">
    <location>
        <begin position="27"/>
        <end position="48"/>
    </location>
</feature>
<feature type="compositionally biased region" description="Polar residues" evidence="3">
    <location>
        <begin position="51"/>
        <end position="60"/>
    </location>
</feature>
<feature type="compositionally biased region" description="Low complexity" evidence="3">
    <location>
        <begin position="122"/>
        <end position="175"/>
    </location>
</feature>
<feature type="compositionally biased region" description="Low complexity" evidence="3">
    <location>
        <begin position="303"/>
        <end position="316"/>
    </location>
</feature>
<feature type="splice variant" id="VSP_058322" description="In isoform 2.">
    <original>GVSDI</original>
    <variation>VCVGD</variation>
    <location>
        <begin position="407"/>
        <end position="411"/>
    </location>
</feature>
<feature type="splice variant" id="VSP_058323" description="In isoform 2.">
    <location>
        <begin position="412"/>
        <end position="470"/>
    </location>
</feature>
<feature type="sequence conflict" description="In Ref. 5; AAI50869." evidence="9" ref="5">
    <original>H</original>
    <variation>R</variation>
    <location>
        <position position="113"/>
    </location>
</feature>
<feature type="sequence conflict" description="In Ref. 5; AAI50869." evidence="9" ref="5">
    <original>R</original>
    <variation>Q</variation>
    <location>
        <position position="401"/>
    </location>
</feature>
<sequence length="470" mass="50541">METTESTEGSLSRSCDVQPSSERLDTPSEPVPSSSSSPRSTAPAEAPAQYSVLTEPSSDSLYGAPCPPAHHRGHGFGFQPFYVSCIPQDPCNMADLSSRADPTSSYPCHSSVHGSGSGTCGLGQSSEPSQGSGPTSGPAPASVPSLVSGPDSASGPDSSASGPALASGPGPADPGQGPKFSTCIPQGYRCIPVDLAPDYNAWCQHLHWKPQRSWEPLQVSEPGVRGPYKPPEPGALGPCEPCEPCEPPEAESEETLCKARPRGQCLLYNWEEERATNQLDQIPPLQDGSESYFFRHGHQGLLTTQPQSPMSSSTTQRDSYQLPRHICQPLRGKREAMLEMLLRHQICKEVQAEQEPARKLFETESVTHHDYRVELVRAAPPASTKPHDYRQEQPETFWIQRAARLPGVSDIRTLDTPFRKNCSFSTPVPLSLGQPLPYELESGPHQVGVISSLACQGGGQGCGRTKTTPI</sequence>
<proteinExistence type="evidence at protein level"/>
<name>SPAG8_MOUSE</name>
<dbReference type="EMBL" id="AY769082">
    <property type="protein sequence ID" value="AAV31155.1"/>
    <property type="molecule type" value="mRNA"/>
</dbReference>
<dbReference type="EMBL" id="AK132968">
    <property type="protein sequence ID" value="BAE21448.1"/>
    <property type="molecule type" value="mRNA"/>
</dbReference>
<dbReference type="EMBL" id="AL732626">
    <property type="status" value="NOT_ANNOTATED_CDS"/>
    <property type="molecule type" value="Genomic_DNA"/>
</dbReference>
<dbReference type="EMBL" id="CH466565">
    <property type="protein sequence ID" value="EDL02455.1"/>
    <property type="molecule type" value="Genomic_DNA"/>
</dbReference>
<dbReference type="EMBL" id="BC150868">
    <property type="protein sequence ID" value="AAI50869.1"/>
    <property type="molecule type" value="mRNA"/>
</dbReference>
<dbReference type="CCDS" id="CCDS38743.1">
    <molecule id="Q3V0Q6-2"/>
</dbReference>
<dbReference type="CCDS" id="CCDS71376.1">
    <molecule id="Q3V0Q6-1"/>
</dbReference>
<dbReference type="RefSeq" id="NP_001007464.1">
    <molecule id="Q3V0Q6-2"/>
    <property type="nucleotide sequence ID" value="NM_001007463.2"/>
</dbReference>
<dbReference type="RefSeq" id="NP_001277391.1">
    <molecule id="Q3V0Q6-1"/>
    <property type="nucleotide sequence ID" value="NM_001290462.2"/>
</dbReference>
<dbReference type="PDB" id="8I7R">
    <property type="method" value="EM"/>
    <property type="resolution" value="6.50 A"/>
    <property type="chains" value="S/T=1-470"/>
</dbReference>
<dbReference type="PDB" id="8IYJ">
    <property type="method" value="EM"/>
    <property type="resolution" value="3.50 A"/>
    <property type="chains" value="D/K3=1-470"/>
</dbReference>
<dbReference type="PDB" id="8TO0">
    <property type="method" value="EM"/>
    <property type="resolution" value="7.70 A"/>
    <property type="chains" value="AZ=1-470"/>
</dbReference>
<dbReference type="PDBsum" id="8I7R"/>
<dbReference type="PDBsum" id="8IYJ"/>
<dbReference type="PDBsum" id="8TO0"/>
<dbReference type="EMDB" id="EMD-35230"/>
<dbReference type="EMDB" id="EMD-35823"/>
<dbReference type="EMDB" id="EMD-41431"/>
<dbReference type="SMR" id="Q3V0Q6"/>
<dbReference type="FunCoup" id="Q3V0Q6">
    <property type="interactions" value="301"/>
</dbReference>
<dbReference type="IntAct" id="Q3V0Q6">
    <property type="interactions" value="1"/>
</dbReference>
<dbReference type="MINT" id="Q3V0Q6"/>
<dbReference type="STRING" id="10090.ENSMUSP00000081696"/>
<dbReference type="GlyGen" id="Q3V0Q6">
    <property type="glycosylation" value="1 site"/>
</dbReference>
<dbReference type="PhosphoSitePlus" id="Q3V0Q6"/>
<dbReference type="SwissPalm" id="Q3V0Q6"/>
<dbReference type="PaxDb" id="10090-ENSMUSP00000103502"/>
<dbReference type="ProteomicsDB" id="261561">
    <molecule id="Q3V0Q6-1"/>
</dbReference>
<dbReference type="ProteomicsDB" id="261562">
    <molecule id="Q3V0Q6-2"/>
</dbReference>
<dbReference type="Antibodypedia" id="26087">
    <property type="antibodies" value="219 antibodies from 26 providers"/>
</dbReference>
<dbReference type="Ensembl" id="ENSMUST00000084646.11">
    <molecule id="Q3V0Q6-1"/>
    <property type="protein sequence ID" value="ENSMUSP00000081696.5"/>
    <property type="gene ID" value="ENSMUSG00000066196.12"/>
</dbReference>
<dbReference type="Ensembl" id="ENSMUST00000107870.3">
    <molecule id="Q3V0Q6-2"/>
    <property type="protein sequence ID" value="ENSMUSP00000103502.3"/>
    <property type="gene ID" value="ENSMUSG00000066196.12"/>
</dbReference>
<dbReference type="GeneID" id="433700"/>
<dbReference type="KEGG" id="mmu:433700"/>
<dbReference type="UCSC" id="uc008sqq.1">
    <molecule id="Q3V0Q6-1"/>
    <property type="organism name" value="mouse"/>
</dbReference>
<dbReference type="UCSC" id="uc008sqr.1">
    <property type="organism name" value="mouse"/>
</dbReference>
<dbReference type="AGR" id="MGI:3056295"/>
<dbReference type="CTD" id="26206"/>
<dbReference type="MGI" id="MGI:3056295">
    <property type="gene designation" value="Spag8"/>
</dbReference>
<dbReference type="VEuPathDB" id="HostDB:ENSMUSG00000066196"/>
<dbReference type="eggNOG" id="ENOG502S06E">
    <property type="taxonomic scope" value="Eukaryota"/>
</dbReference>
<dbReference type="GeneTree" id="ENSGT00640000091617"/>
<dbReference type="InParanoid" id="Q3V0Q6"/>
<dbReference type="OMA" id="HCLLYNW"/>
<dbReference type="OrthoDB" id="2120499at2759"/>
<dbReference type="PhylomeDB" id="Q3V0Q6"/>
<dbReference type="TreeFam" id="TF329075"/>
<dbReference type="BioGRID-ORCS" id="433700">
    <property type="hits" value="2 hits in 76 CRISPR screens"/>
</dbReference>
<dbReference type="ChiTaRS" id="Spag8">
    <property type="organism name" value="mouse"/>
</dbReference>
<dbReference type="PRO" id="PR:Q3V0Q6"/>
<dbReference type="Proteomes" id="UP000000589">
    <property type="component" value="Chromosome 4"/>
</dbReference>
<dbReference type="RNAct" id="Q3V0Q6">
    <property type="molecule type" value="protein"/>
</dbReference>
<dbReference type="Bgee" id="ENSMUSG00000066196">
    <property type="expression patterns" value="Expressed in spermatid and 70 other cell types or tissues"/>
</dbReference>
<dbReference type="ExpressionAtlas" id="Q3V0Q6">
    <property type="expression patterns" value="baseline and differential"/>
</dbReference>
<dbReference type="GO" id="GO:0001669">
    <property type="term" value="C:acrosomal vesicle"/>
    <property type="evidence" value="ECO:0000266"/>
    <property type="project" value="MGI"/>
</dbReference>
<dbReference type="GO" id="GO:0160111">
    <property type="term" value="C:axonemal A tubule inner sheath"/>
    <property type="evidence" value="ECO:0000314"/>
    <property type="project" value="UniProtKB"/>
</dbReference>
<dbReference type="GO" id="GO:0005879">
    <property type="term" value="C:axonemal microtubule"/>
    <property type="evidence" value="ECO:0000250"/>
    <property type="project" value="UniProtKB"/>
</dbReference>
<dbReference type="GO" id="GO:0005737">
    <property type="term" value="C:cytoplasm"/>
    <property type="evidence" value="ECO:0000314"/>
    <property type="project" value="MGI"/>
</dbReference>
<dbReference type="GO" id="GO:0005829">
    <property type="term" value="C:cytosol"/>
    <property type="evidence" value="ECO:0007669"/>
    <property type="project" value="Ensembl"/>
</dbReference>
<dbReference type="GO" id="GO:0001673">
    <property type="term" value="C:male germ cell nucleus"/>
    <property type="evidence" value="ECO:0000314"/>
    <property type="project" value="MGI"/>
</dbReference>
<dbReference type="GO" id="GO:0005815">
    <property type="term" value="C:microtubule organizing center"/>
    <property type="evidence" value="ECO:0007669"/>
    <property type="project" value="UniProtKB-SubCell"/>
</dbReference>
<dbReference type="GO" id="GO:0005654">
    <property type="term" value="C:nucleoplasm"/>
    <property type="evidence" value="ECO:0007669"/>
    <property type="project" value="Ensembl"/>
</dbReference>
<dbReference type="GO" id="GO:0036126">
    <property type="term" value="C:sperm flagellum"/>
    <property type="evidence" value="ECO:0000314"/>
    <property type="project" value="UniProtKB"/>
</dbReference>
<dbReference type="GO" id="GO:0005819">
    <property type="term" value="C:spindle"/>
    <property type="evidence" value="ECO:0007669"/>
    <property type="project" value="UniProtKB-SubCell"/>
</dbReference>
<dbReference type="GO" id="GO:0008017">
    <property type="term" value="F:microtubule binding"/>
    <property type="evidence" value="ECO:0007669"/>
    <property type="project" value="InterPro"/>
</dbReference>
<dbReference type="GO" id="GO:0030154">
    <property type="term" value="P:cell differentiation"/>
    <property type="evidence" value="ECO:0007669"/>
    <property type="project" value="UniProtKB-KW"/>
</dbReference>
<dbReference type="GO" id="GO:0030317">
    <property type="term" value="P:flagellated sperm motility"/>
    <property type="evidence" value="ECO:0000314"/>
    <property type="project" value="UniProtKB"/>
</dbReference>
<dbReference type="GO" id="GO:0045944">
    <property type="term" value="P:positive regulation of transcription by RNA polymerase II"/>
    <property type="evidence" value="ECO:0000316"/>
    <property type="project" value="MGI"/>
</dbReference>
<dbReference type="GO" id="GO:0007338">
    <property type="term" value="P:single fertilization"/>
    <property type="evidence" value="ECO:0007669"/>
    <property type="project" value="UniProtKB-KW"/>
</dbReference>
<dbReference type="GO" id="GO:0007283">
    <property type="term" value="P:spermatogenesis"/>
    <property type="evidence" value="ECO:0007669"/>
    <property type="project" value="UniProtKB-KW"/>
</dbReference>
<dbReference type="InterPro" id="IPR026124">
    <property type="entry name" value="Sperm-assoc_Ag8"/>
</dbReference>
<dbReference type="PANTHER" id="PTHR15510">
    <property type="entry name" value="SPERM-ASSOCIATED ANTIGEN 8"/>
    <property type="match status" value="1"/>
</dbReference>
<dbReference type="PANTHER" id="PTHR15510:SF5">
    <property type="entry name" value="SPERM-ASSOCIATED ANTIGEN 8"/>
    <property type="match status" value="1"/>
</dbReference>
<dbReference type="Pfam" id="PF22584">
    <property type="entry name" value="CFAP143"/>
    <property type="match status" value="1"/>
</dbReference>
<protein>
    <recommendedName>
        <fullName evidence="14">Sperm-associated antigen 8</fullName>
    </recommendedName>
    <alternativeName>
        <fullName evidence="2">Sperm membrane protein 1</fullName>
        <shortName evidence="2">SMP-1</shortName>
    </alternativeName>
    <alternativeName>
        <fullName evidence="2">Sperm membrane protein BS-84</fullName>
    </alternativeName>
</protein>
<organism evidence="10">
    <name type="scientific">Mus musculus</name>
    <name type="common">Mouse</name>
    <dbReference type="NCBI Taxonomy" id="10090"/>
    <lineage>
        <taxon>Eukaryota</taxon>
        <taxon>Metazoa</taxon>
        <taxon>Chordata</taxon>
        <taxon>Craniata</taxon>
        <taxon>Vertebrata</taxon>
        <taxon>Euteleostomi</taxon>
        <taxon>Mammalia</taxon>
        <taxon>Eutheria</taxon>
        <taxon>Euarchontoglires</taxon>
        <taxon>Glires</taxon>
        <taxon>Rodentia</taxon>
        <taxon>Myomorpha</taxon>
        <taxon>Muroidea</taxon>
        <taxon>Muridae</taxon>
        <taxon>Murinae</taxon>
        <taxon>Mus</taxon>
        <taxon>Mus</taxon>
    </lineage>
</organism>